<evidence type="ECO:0000255" key="1">
    <source>
        <dbReference type="HAMAP-Rule" id="MF_01013"/>
    </source>
</evidence>
<accession>B8D116</accession>
<keyword id="KW-0028">Amino-acid biosynthesis</keyword>
<keyword id="KW-0963">Cytoplasm</keyword>
<keyword id="KW-0368">Histidine biosynthesis</keyword>
<keyword id="KW-0456">Lyase</keyword>
<keyword id="KW-1185">Reference proteome</keyword>
<gene>
    <name evidence="1" type="primary">hisF</name>
    <name type="ordered locus">Hore_02240</name>
</gene>
<proteinExistence type="inferred from homology"/>
<comment type="function">
    <text evidence="1">IGPS catalyzes the conversion of PRFAR and glutamine to IGP, AICAR and glutamate. The HisF subunit catalyzes the cyclization activity that produces IGP and AICAR from PRFAR using the ammonia provided by the HisH subunit.</text>
</comment>
<comment type="catalytic activity">
    <reaction evidence="1">
        <text>5-[(5-phospho-1-deoxy-D-ribulos-1-ylimino)methylamino]-1-(5-phospho-beta-D-ribosyl)imidazole-4-carboxamide + L-glutamine = D-erythro-1-(imidazol-4-yl)glycerol 3-phosphate + 5-amino-1-(5-phospho-beta-D-ribosyl)imidazole-4-carboxamide + L-glutamate + H(+)</text>
        <dbReference type="Rhea" id="RHEA:24793"/>
        <dbReference type="ChEBI" id="CHEBI:15378"/>
        <dbReference type="ChEBI" id="CHEBI:29985"/>
        <dbReference type="ChEBI" id="CHEBI:58278"/>
        <dbReference type="ChEBI" id="CHEBI:58359"/>
        <dbReference type="ChEBI" id="CHEBI:58475"/>
        <dbReference type="ChEBI" id="CHEBI:58525"/>
        <dbReference type="EC" id="4.3.2.10"/>
    </reaction>
</comment>
<comment type="pathway">
    <text evidence="1">Amino-acid biosynthesis; L-histidine biosynthesis; L-histidine from 5-phospho-alpha-D-ribose 1-diphosphate: step 5/9.</text>
</comment>
<comment type="subunit">
    <text evidence="1">Heterodimer of HisH and HisF.</text>
</comment>
<comment type="subcellular location">
    <subcellularLocation>
        <location evidence="1">Cytoplasm</location>
    </subcellularLocation>
</comment>
<comment type="similarity">
    <text evidence="1">Belongs to the HisA/HisF family.</text>
</comment>
<sequence>MLTKRIIPCLDVKGGRVVKGVNFKDLRDEGDPVELARYYDREGADELVFLDITASAENRGIVIDMVEKTAASVFIPFTIGGGIRTISDMKAILNAGADKVSINSAAVKNPGLIAEGARVFGSQCIVVAIDCCRKNGNWEVYINGGRTVTGLDAIKWAQKVEELGAGEILLTSMDADGTKDGYDTELLAAVSTAVEIPVIASGGAGMPEHLREAIVEGQADAVLAASIFHEKTYSVSEVKEYLAGHGIPVRIE</sequence>
<dbReference type="EC" id="4.3.2.10" evidence="1"/>
<dbReference type="EMBL" id="CP001098">
    <property type="protein sequence ID" value="ACL68985.1"/>
    <property type="molecule type" value="Genomic_DNA"/>
</dbReference>
<dbReference type="RefSeq" id="WP_012635183.1">
    <property type="nucleotide sequence ID" value="NC_011899.1"/>
</dbReference>
<dbReference type="SMR" id="B8D116"/>
<dbReference type="STRING" id="373903.Hore_02240"/>
<dbReference type="KEGG" id="hor:Hore_02240"/>
<dbReference type="eggNOG" id="COG0107">
    <property type="taxonomic scope" value="Bacteria"/>
</dbReference>
<dbReference type="HOGENOM" id="CLU_048577_4_0_9"/>
<dbReference type="OrthoDB" id="9781903at2"/>
<dbReference type="UniPathway" id="UPA00031">
    <property type="reaction ID" value="UER00010"/>
</dbReference>
<dbReference type="Proteomes" id="UP000000719">
    <property type="component" value="Chromosome"/>
</dbReference>
<dbReference type="GO" id="GO:0005737">
    <property type="term" value="C:cytoplasm"/>
    <property type="evidence" value="ECO:0007669"/>
    <property type="project" value="UniProtKB-SubCell"/>
</dbReference>
<dbReference type="GO" id="GO:0000107">
    <property type="term" value="F:imidazoleglycerol-phosphate synthase activity"/>
    <property type="evidence" value="ECO:0007669"/>
    <property type="project" value="UniProtKB-UniRule"/>
</dbReference>
<dbReference type="GO" id="GO:0016829">
    <property type="term" value="F:lyase activity"/>
    <property type="evidence" value="ECO:0007669"/>
    <property type="project" value="UniProtKB-KW"/>
</dbReference>
<dbReference type="GO" id="GO:0000105">
    <property type="term" value="P:L-histidine biosynthetic process"/>
    <property type="evidence" value="ECO:0007669"/>
    <property type="project" value="UniProtKB-UniRule"/>
</dbReference>
<dbReference type="CDD" id="cd04731">
    <property type="entry name" value="HisF"/>
    <property type="match status" value="1"/>
</dbReference>
<dbReference type="FunFam" id="3.20.20.70:FF:000006">
    <property type="entry name" value="Imidazole glycerol phosphate synthase subunit HisF"/>
    <property type="match status" value="1"/>
</dbReference>
<dbReference type="Gene3D" id="3.20.20.70">
    <property type="entry name" value="Aldolase class I"/>
    <property type="match status" value="1"/>
</dbReference>
<dbReference type="HAMAP" id="MF_01013">
    <property type="entry name" value="HisF"/>
    <property type="match status" value="1"/>
</dbReference>
<dbReference type="InterPro" id="IPR013785">
    <property type="entry name" value="Aldolase_TIM"/>
</dbReference>
<dbReference type="InterPro" id="IPR006062">
    <property type="entry name" value="His_biosynth"/>
</dbReference>
<dbReference type="InterPro" id="IPR004651">
    <property type="entry name" value="HisF"/>
</dbReference>
<dbReference type="InterPro" id="IPR050064">
    <property type="entry name" value="IGPS_HisA/HisF"/>
</dbReference>
<dbReference type="InterPro" id="IPR011060">
    <property type="entry name" value="RibuloseP-bd_barrel"/>
</dbReference>
<dbReference type="NCBIfam" id="TIGR00735">
    <property type="entry name" value="hisF"/>
    <property type="match status" value="1"/>
</dbReference>
<dbReference type="PANTHER" id="PTHR21235:SF2">
    <property type="entry name" value="IMIDAZOLE GLYCEROL PHOSPHATE SYNTHASE HISHF"/>
    <property type="match status" value="1"/>
</dbReference>
<dbReference type="PANTHER" id="PTHR21235">
    <property type="entry name" value="IMIDAZOLE GLYCEROL PHOSPHATE SYNTHASE SUBUNIT HISF/H IGP SYNTHASE SUBUNIT HISF/H"/>
    <property type="match status" value="1"/>
</dbReference>
<dbReference type="Pfam" id="PF00977">
    <property type="entry name" value="His_biosynth"/>
    <property type="match status" value="1"/>
</dbReference>
<dbReference type="SUPFAM" id="SSF51366">
    <property type="entry name" value="Ribulose-phoshate binding barrel"/>
    <property type="match status" value="1"/>
</dbReference>
<feature type="chain" id="PRO_1000148923" description="Imidazole glycerol phosphate synthase subunit HisF">
    <location>
        <begin position="1"/>
        <end position="252"/>
    </location>
</feature>
<feature type="active site" evidence="1">
    <location>
        <position position="11"/>
    </location>
</feature>
<feature type="active site" evidence="1">
    <location>
        <position position="130"/>
    </location>
</feature>
<organism>
    <name type="scientific">Halothermothrix orenii (strain H 168 / OCM 544 / DSM 9562)</name>
    <dbReference type="NCBI Taxonomy" id="373903"/>
    <lineage>
        <taxon>Bacteria</taxon>
        <taxon>Bacillati</taxon>
        <taxon>Bacillota</taxon>
        <taxon>Clostridia</taxon>
        <taxon>Halanaerobiales</taxon>
        <taxon>Halothermotrichaceae</taxon>
        <taxon>Halothermothrix</taxon>
    </lineage>
</organism>
<protein>
    <recommendedName>
        <fullName evidence="1">Imidazole glycerol phosphate synthase subunit HisF</fullName>
        <ecNumber evidence="1">4.3.2.10</ecNumber>
    </recommendedName>
    <alternativeName>
        <fullName evidence="1">IGP synthase cyclase subunit</fullName>
    </alternativeName>
    <alternativeName>
        <fullName evidence="1">IGP synthase subunit HisF</fullName>
    </alternativeName>
    <alternativeName>
        <fullName evidence="1">ImGP synthase subunit HisF</fullName>
        <shortName evidence="1">IGPS subunit HisF</shortName>
    </alternativeName>
</protein>
<name>HIS6_HALOH</name>
<reference key="1">
    <citation type="journal article" date="2009" name="PLoS ONE">
        <title>Genome analysis of the anaerobic thermohalophilic bacterium Halothermothrix orenii.</title>
        <authorList>
            <person name="Mavromatis K."/>
            <person name="Ivanova N."/>
            <person name="Anderson I."/>
            <person name="Lykidis A."/>
            <person name="Hooper S.D."/>
            <person name="Sun H."/>
            <person name="Kunin V."/>
            <person name="Lapidus A."/>
            <person name="Hugenholtz P."/>
            <person name="Patel B."/>
            <person name="Kyrpides N.C."/>
        </authorList>
    </citation>
    <scope>NUCLEOTIDE SEQUENCE [LARGE SCALE GENOMIC DNA]</scope>
    <source>
        <strain>H 168 / OCM 544 / DSM 9562</strain>
    </source>
</reference>